<reference key="1">
    <citation type="journal article" date="2007" name="PLoS ONE">
        <title>Evidence for positive selection in the C-terminal domain of the cholesterol metabolism gene PCSK9 based on phylogenetic analysis in 14 primate species.</title>
        <authorList>
            <person name="Ding K."/>
            <person name="McDonough S.J."/>
            <person name="Kullo I.J."/>
        </authorList>
    </citation>
    <scope>NUCLEOTIDE SEQUENCE [MRNA]</scope>
</reference>
<protein>
    <recommendedName>
        <fullName>Proprotein convertase subtilisin/kexin type 9</fullName>
        <ecNumber>3.4.21.-</ecNumber>
    </recommendedName>
    <alternativeName>
        <fullName>Proprotein convertase 9</fullName>
        <shortName>PC9</shortName>
    </alternativeName>
    <alternativeName>
        <fullName>Subtilisin/kexin-like protease PC9</fullName>
    </alternativeName>
</protein>
<proteinExistence type="evidence at transcript level"/>
<gene>
    <name type="primary">PCSK9</name>
</gene>
<accession>A8T6A1</accession>
<comment type="function">
    <text evidence="1">Crucial player in the regulation of plasma cholesterol homeostasis. Binds to low-density lipid receptor family members: low density lipoprotein receptor (LDLR), very low density lipoprotein receptor (VLDLR), apolipoprotein E receptor (LRP1/APOER) and apolipoprotein receptor 2 (LRP8/APOER2), and promotes their degradation in intracellular acidic compartments. Acts via a non-proteolytic mechanism to enhance the degradation of the hepatic LDLR through a clathrin LDLRAP1/ARH-mediated pathway. May prevent the recycling of LDLR from endosomes to the cell surface or direct it to lysosomes for degradation. Can induce ubiquitination of LDLR leading to its subsequent degradation. Inhibits intracellular degradation of APOB via the autophagosome/lysosome pathway in a LDLR-independent manner. Involved in the disposal of non-acetylated intermediates of BACE1 in the early secretory pathway. Inhibits epithelial Na(+) channel (ENaC)-mediated Na(+) absorption by reducing ENaC surface expression primarily by increasing its proteasomal degradation. Regulates neuronal apoptosis via modulation of LRP8/APOER2 levels and related anti-apoptotic signaling pathways (By similarity).</text>
</comment>
<comment type="cofactor">
    <cofactor evidence="1">
        <name>Ca(2+)</name>
        <dbReference type="ChEBI" id="CHEBI:29108"/>
    </cofactor>
</comment>
<comment type="activity regulation">
    <text evidence="1">Its proteolytic activity is autoinhibited by the non-covalent binding of the propeptide to the catalytic domain. Inhibited by EGTA (By similarity).</text>
</comment>
<comment type="subunit">
    <text evidence="2">Monomer. Can self-associate to form dimers and higher multimers which may have increased LDLR degrading activity. The precursor protein but not the mature protein may form multimers. Interacts with APOB, VLDLR, LRP8/APOER2 and BACE1. The full-length immature form (pro-PCSK9) interacts with SCNN1A, SCNN1B and SCNN1G. The pro-PCSK9 form (via C-terminal domain) interacts with LDLR. Interacts (via the C-terminal domain) with ANXA2 (via repeat Annexin 1); the interaction inhibits the degradation of LDLR.</text>
</comment>
<comment type="subcellular location">
    <subcellularLocation>
        <location evidence="1">Cytoplasm</location>
    </subcellularLocation>
    <subcellularLocation>
        <location evidence="1">Secreted</location>
    </subcellularLocation>
    <subcellularLocation>
        <location evidence="1">Endosome</location>
    </subcellularLocation>
    <subcellularLocation>
        <location evidence="1">Lysosome</location>
    </subcellularLocation>
    <subcellularLocation>
        <location evidence="1">Cell surface</location>
    </subcellularLocation>
    <subcellularLocation>
        <location evidence="1">Endoplasmic reticulum</location>
    </subcellularLocation>
    <subcellularLocation>
        <location evidence="1">Golgi apparatus</location>
    </subcellularLocation>
    <text evidence="1">Autocatalytic cleavage is required to transport it from the endoplasmic reticulum to the Golgi apparatus and for the secretion of the mature protein. Localizes to the endoplasmic reticulum in the absence of LDLR and colocalizes to the cell surface and to the endosomes/lysosomes in the presence of LDLR. The sorting to the cell surface and endosomes is required in order to fully promote LDLR degradation (By similarity).</text>
</comment>
<comment type="domain">
    <text evidence="1">The C-terminal domain (CRD) is essential for the LDLR-binding and degrading activities.</text>
</comment>
<comment type="domain">
    <text evidence="1">The catalytic domain is responsible for mediating its self-association.</text>
</comment>
<comment type="PTM">
    <text evidence="1">Cleavage by furin and PCSK5 generates a truncated inactive protein that is unable to induce LDLR degradation.</text>
</comment>
<comment type="PTM">
    <text evidence="1">Undergoes autocatalytic cleavage in the endoplasmic reticulum to release the propeptide from the N-terminus and the cleavage of the propeptide is strictly required for its maturation and activation. The cleaved propeptide however remains associated with the catalytic domain through non-covalent interactions, preventing potential substrates from accessing its active site. As a result, it is secreted from cells as a propeptide-containing, enzymatically inactive protein (By similarity).</text>
</comment>
<comment type="PTM">
    <text evidence="1">Phosphorylation protects the propeptide against proteolysis.</text>
</comment>
<comment type="similarity">
    <text evidence="5">Belongs to the peptidase S8 family.</text>
</comment>
<keyword id="KW-0053">Apoptosis</keyword>
<keyword id="KW-0068">Autocatalytic cleavage</keyword>
<keyword id="KW-0106">Calcium</keyword>
<keyword id="KW-0153">Cholesterol metabolism</keyword>
<keyword id="KW-0963">Cytoplasm</keyword>
<keyword id="KW-1015">Disulfide bond</keyword>
<keyword id="KW-0256">Endoplasmic reticulum</keyword>
<keyword id="KW-0967">Endosome</keyword>
<keyword id="KW-0325">Glycoprotein</keyword>
<keyword id="KW-0333">Golgi apparatus</keyword>
<keyword id="KW-0378">Hydrolase</keyword>
<keyword id="KW-0443">Lipid metabolism</keyword>
<keyword id="KW-0458">Lysosome</keyword>
<keyword id="KW-0597">Phosphoprotein</keyword>
<keyword id="KW-0645">Protease</keyword>
<keyword id="KW-0964">Secreted</keyword>
<keyword id="KW-0720">Serine protease</keyword>
<keyword id="KW-0732">Signal</keyword>
<keyword id="KW-0753">Steroid metabolism</keyword>
<keyword id="KW-1207">Sterol metabolism</keyword>
<keyword id="KW-0765">Sulfation</keyword>
<keyword id="KW-0865">Zymogen</keyword>
<name>PCSK9_ATEGE</name>
<sequence>MGTVRSRRLWWPLPLLLLLLRGPAGARAQEDDDGDYEELVLALRSEEDGLAEAPQHGATATFHRCAKDPWRLPGTYVVVLKEETQRSQPERTARRLQAQAARRGYLIKLLHVFHDLLPGFLVKMSRDLLELALRLPHVDYIEEDSYVFAQSIPWNLERITPARYRADEYQPPNGGSLVEVYLLDTSIQSGHREIEGRVMVTDFESVPEEDGTRFHRQASKCDSHGTHLAGVVSGRDAGVAKGASLRSLRVLNCQGKGTVSSTLIGLEFIRKNQLVQPVGPLVVLLPLAGGYSRVLNAACQRLAKAGVVLVAAAGNFRDDACLYSPASAPEVITVGATNAQDQPVTLGTLGTNFGRCVDLFAPGEDIIGASSDCSTCFVSRSGTSQAAAHVAGIAAMMLSAEPELTLAELRQRLIHFSAKDVINEAWFPEDQRVLTPNLVAALPPSTHGAGWQLFCRTVWSAHSGPTRMATAMARCAPDEELLSCSSFSRSGKRRGERIKAQGGRRVCLAHNAFGGEGVYAIARCCLLPQANCSVHTAPPAGAGMGTRVHCHHQGHVLTGCSSHWEVEDLGTHKPSVLRPRVQPDQCMGHSGASTHASCCHAPGLECKVKEHGLPAPQEQVTVACEEGWTLTGCSALPGTSHVLGAYAVDDTCVVRSRDVSTTGNTSEQAVAAVAICCRSRHLAQASQELQ</sequence>
<organism>
    <name type="scientific">Ateles geoffroyi</name>
    <name type="common">Black-handed spider monkey</name>
    <name type="synonym">Geoffroy's spider monkey</name>
    <dbReference type="NCBI Taxonomy" id="9509"/>
    <lineage>
        <taxon>Eukaryota</taxon>
        <taxon>Metazoa</taxon>
        <taxon>Chordata</taxon>
        <taxon>Craniata</taxon>
        <taxon>Vertebrata</taxon>
        <taxon>Euteleostomi</taxon>
        <taxon>Mammalia</taxon>
        <taxon>Eutheria</taxon>
        <taxon>Euarchontoglires</taxon>
        <taxon>Primates</taxon>
        <taxon>Haplorrhini</taxon>
        <taxon>Platyrrhini</taxon>
        <taxon>Atelidae</taxon>
        <taxon>Atelinae</taxon>
        <taxon>Ateles</taxon>
    </lineage>
</organism>
<evidence type="ECO:0000250" key="1"/>
<evidence type="ECO:0000250" key="2">
    <source>
        <dbReference type="UniProtKB" id="Q8NBP7"/>
    </source>
</evidence>
<evidence type="ECO:0000255" key="3"/>
<evidence type="ECO:0000255" key="4">
    <source>
        <dbReference type="PROSITE-ProRule" id="PRU01240"/>
    </source>
</evidence>
<evidence type="ECO:0000305" key="5"/>
<dbReference type="EC" id="3.4.21.-"/>
<dbReference type="EMBL" id="EF692508">
    <property type="protein sequence ID" value="ABV59228.1"/>
    <property type="molecule type" value="mRNA"/>
</dbReference>
<dbReference type="SMR" id="A8T6A1"/>
<dbReference type="GlyCosmos" id="A8T6A1">
    <property type="glycosylation" value="1 site, No reported glycans"/>
</dbReference>
<dbReference type="OrthoDB" id="206201at2759"/>
<dbReference type="GO" id="GO:0009986">
    <property type="term" value="C:cell surface"/>
    <property type="evidence" value="ECO:0000250"/>
    <property type="project" value="UniProtKB"/>
</dbReference>
<dbReference type="GO" id="GO:0005737">
    <property type="term" value="C:cytoplasm"/>
    <property type="evidence" value="ECO:0000250"/>
    <property type="project" value="UniProtKB"/>
</dbReference>
<dbReference type="GO" id="GO:0005769">
    <property type="term" value="C:early endosome"/>
    <property type="evidence" value="ECO:0000250"/>
    <property type="project" value="UniProtKB"/>
</dbReference>
<dbReference type="GO" id="GO:0005783">
    <property type="term" value="C:endoplasmic reticulum"/>
    <property type="evidence" value="ECO:0000250"/>
    <property type="project" value="UniProtKB"/>
</dbReference>
<dbReference type="GO" id="GO:0005615">
    <property type="term" value="C:extracellular space"/>
    <property type="evidence" value="ECO:0007669"/>
    <property type="project" value="TreeGrafter"/>
</dbReference>
<dbReference type="GO" id="GO:0005794">
    <property type="term" value="C:Golgi apparatus"/>
    <property type="evidence" value="ECO:0000250"/>
    <property type="project" value="UniProtKB"/>
</dbReference>
<dbReference type="GO" id="GO:0005770">
    <property type="term" value="C:late endosome"/>
    <property type="evidence" value="ECO:0000250"/>
    <property type="project" value="UniProtKB"/>
</dbReference>
<dbReference type="GO" id="GO:0005764">
    <property type="term" value="C:lysosome"/>
    <property type="evidence" value="ECO:0000250"/>
    <property type="project" value="UniProtKB"/>
</dbReference>
<dbReference type="GO" id="GO:0034185">
    <property type="term" value="F:apolipoprotein binding"/>
    <property type="evidence" value="ECO:0000250"/>
    <property type="project" value="UniProtKB"/>
</dbReference>
<dbReference type="GO" id="GO:0030169">
    <property type="term" value="F:low-density lipoprotein particle binding"/>
    <property type="evidence" value="ECO:0000250"/>
    <property type="project" value="UniProtKB"/>
</dbReference>
<dbReference type="GO" id="GO:0004252">
    <property type="term" value="F:serine-type endopeptidase activity"/>
    <property type="evidence" value="ECO:0007669"/>
    <property type="project" value="InterPro"/>
</dbReference>
<dbReference type="GO" id="GO:0034189">
    <property type="term" value="F:very-low-density lipoprotein particle binding"/>
    <property type="evidence" value="ECO:0000250"/>
    <property type="project" value="UniProtKB"/>
</dbReference>
<dbReference type="GO" id="GO:0006915">
    <property type="term" value="P:apoptotic process"/>
    <property type="evidence" value="ECO:0007669"/>
    <property type="project" value="UniProtKB-KW"/>
</dbReference>
<dbReference type="GO" id="GO:0008203">
    <property type="term" value="P:cholesterol metabolic process"/>
    <property type="evidence" value="ECO:0007669"/>
    <property type="project" value="UniProtKB-KW"/>
</dbReference>
<dbReference type="GO" id="GO:0032802">
    <property type="term" value="P:low-density lipoprotein particle receptor catabolic process"/>
    <property type="evidence" value="ECO:0000250"/>
    <property type="project" value="UniProtKB"/>
</dbReference>
<dbReference type="GO" id="GO:0006508">
    <property type="term" value="P:proteolysis"/>
    <property type="evidence" value="ECO:0007669"/>
    <property type="project" value="UniProtKB-KW"/>
</dbReference>
<dbReference type="GO" id="GO:0043523">
    <property type="term" value="P:regulation of neuron apoptotic process"/>
    <property type="evidence" value="ECO:0000250"/>
    <property type="project" value="UniProtKB"/>
</dbReference>
<dbReference type="CDD" id="cd16839">
    <property type="entry name" value="PCSK9_C-CRD"/>
    <property type="match status" value="1"/>
</dbReference>
<dbReference type="CDD" id="cd04077">
    <property type="entry name" value="Peptidases_S8_PCSK9_ProteinaseK_like"/>
    <property type="match status" value="1"/>
</dbReference>
<dbReference type="FunFam" id="2.60.120.690:FF:000001">
    <property type="entry name" value="Proprotein convertase subtilisin/kexin type 9"/>
    <property type="match status" value="1"/>
</dbReference>
<dbReference type="FunFam" id="3.30.70.80:FF:000004">
    <property type="entry name" value="Proprotein convertase subtilisin/kexin type 9"/>
    <property type="match status" value="1"/>
</dbReference>
<dbReference type="FunFam" id="3.40.50.200:FF:000016">
    <property type="entry name" value="Proprotein convertase subtilisin/kexin type 9"/>
    <property type="match status" value="1"/>
</dbReference>
<dbReference type="Gene3D" id="3.30.70.80">
    <property type="entry name" value="Peptidase S8 propeptide/proteinase inhibitor I9"/>
    <property type="match status" value="1"/>
</dbReference>
<dbReference type="Gene3D" id="3.40.50.200">
    <property type="entry name" value="Peptidase S8/S53 domain"/>
    <property type="match status" value="1"/>
</dbReference>
<dbReference type="Gene3D" id="2.60.120.690">
    <property type="entry name" value="Proprotein convertase subtilisin/kexin type 9"/>
    <property type="match status" value="1"/>
</dbReference>
<dbReference type="InterPro" id="IPR041254">
    <property type="entry name" value="PCSK9_C1"/>
</dbReference>
<dbReference type="InterPro" id="IPR041052">
    <property type="entry name" value="PCSK9_C2"/>
</dbReference>
<dbReference type="InterPro" id="IPR041051">
    <property type="entry name" value="PCSK9_C3"/>
</dbReference>
<dbReference type="InterPro" id="IPR034193">
    <property type="entry name" value="PCSK9_ProteinaseK-like"/>
</dbReference>
<dbReference type="InterPro" id="IPR000209">
    <property type="entry name" value="Peptidase_S8/S53_dom"/>
</dbReference>
<dbReference type="InterPro" id="IPR036852">
    <property type="entry name" value="Peptidase_S8/S53_dom_sf"/>
</dbReference>
<dbReference type="InterPro" id="IPR050131">
    <property type="entry name" value="Peptidase_S8_subtilisin-like"/>
</dbReference>
<dbReference type="InterPro" id="IPR015500">
    <property type="entry name" value="Peptidase_S8_subtilisin-rel"/>
</dbReference>
<dbReference type="InterPro" id="IPR010259">
    <property type="entry name" value="S8pro/Inhibitor_I9"/>
</dbReference>
<dbReference type="InterPro" id="IPR037045">
    <property type="entry name" value="S8pro/Inhibitor_I9_sf"/>
</dbReference>
<dbReference type="PANTHER" id="PTHR43806">
    <property type="entry name" value="PEPTIDASE S8"/>
    <property type="match status" value="1"/>
</dbReference>
<dbReference type="PANTHER" id="PTHR43806:SF60">
    <property type="entry name" value="PROPROTEIN CONVERTASE SUBTILISIN_KEXIN TYPE 9"/>
    <property type="match status" value="1"/>
</dbReference>
<dbReference type="Pfam" id="PF05922">
    <property type="entry name" value="Inhibitor_I9"/>
    <property type="match status" value="1"/>
</dbReference>
<dbReference type="Pfam" id="PF18459">
    <property type="entry name" value="PCSK9_C1"/>
    <property type="match status" value="1"/>
</dbReference>
<dbReference type="Pfam" id="PF18464">
    <property type="entry name" value="PCSK9_C2"/>
    <property type="match status" value="1"/>
</dbReference>
<dbReference type="Pfam" id="PF18463">
    <property type="entry name" value="PCSK9_C3"/>
    <property type="match status" value="1"/>
</dbReference>
<dbReference type="Pfam" id="PF00082">
    <property type="entry name" value="Peptidase_S8"/>
    <property type="match status" value="1"/>
</dbReference>
<dbReference type="PRINTS" id="PR00723">
    <property type="entry name" value="SUBTILISIN"/>
</dbReference>
<dbReference type="SUPFAM" id="SSF54897">
    <property type="entry name" value="Protease propeptides/inhibitors"/>
    <property type="match status" value="1"/>
</dbReference>
<dbReference type="SUPFAM" id="SSF52743">
    <property type="entry name" value="Subtilisin-like"/>
    <property type="match status" value="1"/>
</dbReference>
<dbReference type="PROSITE" id="PS51892">
    <property type="entry name" value="SUBTILASE"/>
    <property type="match status" value="1"/>
</dbReference>
<feature type="signal peptide" evidence="1">
    <location>
        <begin position="1"/>
        <end position="28"/>
    </location>
</feature>
<feature type="propeptide" id="PRO_0000318272" evidence="1">
    <location>
        <begin position="29"/>
        <end position="150"/>
    </location>
</feature>
<feature type="chain" id="PRO_0000318273" description="Proprotein convertase subtilisin/kexin type 9">
    <location>
        <begin position="151"/>
        <end position="690"/>
    </location>
</feature>
<feature type="domain" description="Inhibitor I9" evidence="3">
    <location>
        <begin position="75"/>
        <end position="147"/>
    </location>
</feature>
<feature type="domain" description="Peptidase S8" evidence="4">
    <location>
        <begin position="153"/>
        <end position="459"/>
    </location>
</feature>
<feature type="region of interest" description="C-terminal domain" evidence="1">
    <location>
        <begin position="448"/>
        <end position="690"/>
    </location>
</feature>
<feature type="active site" description="Charge relay system" evidence="4">
    <location>
        <position position="184"/>
    </location>
</feature>
<feature type="active site" description="Charge relay system" evidence="4">
    <location>
        <position position="224"/>
    </location>
</feature>
<feature type="active site" description="Charge relay system" evidence="4">
    <location>
        <position position="384"/>
    </location>
</feature>
<feature type="site" description="Cleavage; by autolysis" evidence="1">
    <location>
        <begin position="150"/>
        <end position="151"/>
    </location>
</feature>
<feature type="site" description="Cleavage; by furin and PCSK5" evidence="1">
    <location>
        <begin position="216"/>
        <end position="217"/>
    </location>
</feature>
<feature type="modified residue" description="Sulfotyrosine" evidence="1">
    <location>
        <position position="36"/>
    </location>
</feature>
<feature type="modified residue" description="Phosphoserine" evidence="2">
    <location>
        <position position="45"/>
    </location>
</feature>
<feature type="modified residue" description="Phosphoserine" evidence="2">
    <location>
        <position position="686"/>
    </location>
</feature>
<feature type="glycosylation site" description="N-linked (GlcNAc...) asparagine" evidence="3">
    <location>
        <position position="531"/>
    </location>
</feature>
<feature type="disulfide bond" evidence="3">
    <location>
        <begin position="221"/>
        <end position="253"/>
    </location>
</feature>
<feature type="disulfide bond" evidence="3">
    <location>
        <begin position="321"/>
        <end position="356"/>
    </location>
</feature>
<feature type="disulfide bond" evidence="3">
    <location>
        <begin position="455"/>
        <end position="525"/>
    </location>
</feature>
<feature type="disulfide bond" evidence="3">
    <location>
        <begin position="475"/>
        <end position="524"/>
    </location>
</feature>
<feature type="disulfide bond" evidence="3">
    <location>
        <begin position="484"/>
        <end position="507"/>
    </location>
</feature>
<feature type="disulfide bond" evidence="3">
    <location>
        <begin position="532"/>
        <end position="599"/>
    </location>
</feature>
<feature type="disulfide bond" evidence="3">
    <location>
        <begin position="550"/>
        <end position="598"/>
    </location>
</feature>
<feature type="disulfide bond" evidence="3">
    <location>
        <begin position="560"/>
        <end position="586"/>
    </location>
</feature>
<feature type="disulfide bond" evidence="3">
    <location>
        <begin position="606"/>
        <end position="677"/>
    </location>
</feature>
<feature type="disulfide bond" evidence="3">
    <location>
        <begin position="624"/>
        <end position="676"/>
    </location>
</feature>
<feature type="disulfide bond" evidence="3">
    <location>
        <begin position="633"/>
        <end position="652"/>
    </location>
</feature>